<comment type="function">
    <text evidence="1 2">Catalyzes the hydrolysis of S-adenosyl-L-methionine (SAM) into adenosine and L-methionine (PubMed:18551689). Is likely stereoselective, specifically hydrolyzing (R)-S-adenosyl-L-methionine ((R)-SAM), the inactive form of the ubiquitous cofactor SAM, and not the active form of SAM, (S)-S-adenosyl-L-methionine (By similarity). Probaly plays a role in preventing accumulation of (R)-S-adenosyl-L-methionine in cells; maintenance of (S)-S-denosyl-L-methionine homochirality is important for cellular health given that the (R)-form is largely inactive as a methyl donor and can function as an inhibitor of methyltransferases (By similarity). Is unable to mediate a fluorination or chlorination reaction with SAM (PubMed:18551689).</text>
</comment>
<comment type="catalytic activity">
    <reaction evidence="1 7">
        <text>(R)-S-adenosyl-L-methionine + H2O = adenosine + L-methionine + H(+)</text>
        <dbReference type="Rhea" id="RHEA:67240"/>
        <dbReference type="ChEBI" id="CHEBI:15377"/>
        <dbReference type="ChEBI" id="CHEBI:15378"/>
        <dbReference type="ChEBI" id="CHEBI:16335"/>
        <dbReference type="ChEBI" id="CHEBI:57844"/>
        <dbReference type="ChEBI" id="CHEBI:142093"/>
        <dbReference type="EC" id="3.13.2.3"/>
    </reaction>
    <physiologicalReaction direction="left-to-right" evidence="1">
        <dbReference type="Rhea" id="RHEA:67241"/>
    </physiologicalReaction>
</comment>
<comment type="biophysicochemical properties">
    <kinetics>
        <KM evidence="2">39.2 uM for S-adenosyl-L-methionine</KM>
        <text evidence="2">kcat is 0.14 sec(-1).</text>
    </kinetics>
    <phDependence>
        <text evidence="2">Optimum pH is 8.5.</text>
    </phDependence>
</comment>
<comment type="subunit">
    <text evidence="3">Homotrimer.</text>
</comment>
<comment type="similarity">
    <text evidence="6">Belongs to the SAM hydrolase / SAM-dependent halogenase family.</text>
</comment>
<organism>
    <name type="scientific">Pyrococcus horikoshii (strain ATCC 700860 / DSM 12428 / JCM 9974 / NBRC 100139 / OT-3)</name>
    <dbReference type="NCBI Taxonomy" id="70601"/>
    <lineage>
        <taxon>Archaea</taxon>
        <taxon>Methanobacteriati</taxon>
        <taxon>Methanobacteriota</taxon>
        <taxon>Thermococci</taxon>
        <taxon>Thermococcales</taxon>
        <taxon>Thermococcaceae</taxon>
        <taxon>Pyrococcus</taxon>
    </lineage>
</organism>
<proteinExistence type="evidence at protein level"/>
<name>RSAMH_PYRHO</name>
<evidence type="ECO:0000250" key="1">
    <source>
        <dbReference type="UniProtKB" id="A4X4S2"/>
    </source>
</evidence>
<evidence type="ECO:0000269" key="2">
    <source>
    </source>
</evidence>
<evidence type="ECO:0000269" key="3">
    <source>
    </source>
</evidence>
<evidence type="ECO:0000269" key="4">
    <source ref="3"/>
</evidence>
<evidence type="ECO:0000303" key="5">
    <source>
    </source>
</evidence>
<evidence type="ECO:0000305" key="6"/>
<evidence type="ECO:0000305" key="7">
    <source>
    </source>
</evidence>
<evidence type="ECO:0000305" key="8">
    <source>
    </source>
</evidence>
<evidence type="ECO:0000312" key="9">
    <source>
        <dbReference type="EMBL" id="BAA29549.1"/>
    </source>
</evidence>
<evidence type="ECO:0007744" key="10">
    <source>
        <dbReference type="PDB" id="1WU8"/>
    </source>
</evidence>
<evidence type="ECO:0007744" key="11">
    <source>
        <dbReference type="PDB" id="2WR8"/>
    </source>
</evidence>
<evidence type="ECO:0007829" key="12">
    <source>
        <dbReference type="PDB" id="1WU8"/>
    </source>
</evidence>
<evidence type="ECO:0007829" key="13">
    <source>
        <dbReference type="PDB" id="2WR8"/>
    </source>
</evidence>
<accession>O58212</accession>
<sequence length="256" mass="28615">MITLTTDFGLKGPYVGEMKVAMLRINPNAKIVDVTHSVTRHSILEGSFVMEQVVKYSPKGTVHVGVIDPGVGTERRAIVIEGDQYLVVPDNGLATLPLKHIKVKSVYEIIPDKIRKFTGWEISSTFHGRDIFGPAGALIEKGIHPEEFGREIPVDSIVKLNVEPRKEGDVWILKVIYIDDFGNVILNLENYEKPRTVELLDFNLRLPYLETYGLVEKGEMLALPGSHDYLEIAVNMGSAAERLNVKVGDELRVRLL</sequence>
<dbReference type="EC" id="3.13.2.3" evidence="1 7"/>
<dbReference type="EMBL" id="BA000001">
    <property type="protein sequence ID" value="BAA29549.1"/>
    <property type="molecule type" value="Genomic_DNA"/>
</dbReference>
<dbReference type="PIR" id="H71157">
    <property type="entry name" value="H71157"/>
</dbReference>
<dbReference type="RefSeq" id="WP_010884570.1">
    <property type="nucleotide sequence ID" value="NC_000961.1"/>
</dbReference>
<dbReference type="PDB" id="1WU8">
    <property type="method" value="X-ray"/>
    <property type="resolution" value="2.60 A"/>
    <property type="chains" value="A/B/C=1-256"/>
</dbReference>
<dbReference type="PDB" id="2WR8">
    <property type="method" value="X-ray"/>
    <property type="resolution" value="1.77 A"/>
    <property type="chains" value="A=1-256"/>
</dbReference>
<dbReference type="PDBsum" id="1WU8"/>
<dbReference type="PDBsum" id="2WR8"/>
<dbReference type="SMR" id="O58212"/>
<dbReference type="STRING" id="70601.gene:9377394"/>
<dbReference type="DNASU" id="1444357"/>
<dbReference type="EnsemblBacteria" id="BAA29549">
    <property type="protein sequence ID" value="BAA29549"/>
    <property type="gene ID" value="BAA29549"/>
</dbReference>
<dbReference type="GeneID" id="1444357"/>
<dbReference type="KEGG" id="pho:PH0463"/>
<dbReference type="eggNOG" id="arCOG04309">
    <property type="taxonomic scope" value="Archaea"/>
</dbReference>
<dbReference type="OrthoDB" id="372224at2157"/>
<dbReference type="BRENDA" id="2.5.1.B21">
    <property type="organism ID" value="5244"/>
</dbReference>
<dbReference type="BRENDA" id="3.13.1.8">
    <property type="organism ID" value="5244"/>
</dbReference>
<dbReference type="EvolutionaryTrace" id="O58212"/>
<dbReference type="Proteomes" id="UP000000752">
    <property type="component" value="Chromosome"/>
</dbReference>
<dbReference type="GO" id="GO:0016787">
    <property type="term" value="F:hydrolase activity"/>
    <property type="evidence" value="ECO:0007669"/>
    <property type="project" value="UniProtKB-KW"/>
</dbReference>
<dbReference type="Gene3D" id="2.40.30.90">
    <property type="entry name" value="Bacterial fluorinating enzyme like"/>
    <property type="match status" value="1"/>
</dbReference>
<dbReference type="Gene3D" id="3.40.50.10790">
    <property type="entry name" value="S-adenosyl-l-methionine hydroxide adenosyltransferase, N-terminal"/>
    <property type="match status" value="1"/>
</dbReference>
<dbReference type="InterPro" id="IPR046470">
    <property type="entry name" value="SAM_HAT_C"/>
</dbReference>
<dbReference type="InterPro" id="IPR046469">
    <property type="entry name" value="SAM_HAT_N"/>
</dbReference>
<dbReference type="InterPro" id="IPR002747">
    <property type="entry name" value="SAM_OH_AdoTrfase"/>
</dbReference>
<dbReference type="InterPro" id="IPR023227">
    <property type="entry name" value="SAM_OH_AdoTrfase_C_sf"/>
</dbReference>
<dbReference type="InterPro" id="IPR023228">
    <property type="entry name" value="SAM_OH_AdoTrfase_N_sf"/>
</dbReference>
<dbReference type="PANTHER" id="PTHR35092">
    <property type="entry name" value="CHLORINASE MJ1651"/>
    <property type="match status" value="1"/>
</dbReference>
<dbReference type="PANTHER" id="PTHR35092:SF1">
    <property type="entry name" value="CHLORINASE MJ1651"/>
    <property type="match status" value="1"/>
</dbReference>
<dbReference type="Pfam" id="PF20257">
    <property type="entry name" value="SAM_HAT_C"/>
    <property type="match status" value="1"/>
</dbReference>
<dbReference type="Pfam" id="PF01887">
    <property type="entry name" value="SAM_HAT_N"/>
    <property type="match status" value="1"/>
</dbReference>
<dbReference type="PIRSF" id="PIRSF006779">
    <property type="entry name" value="UCP006779"/>
    <property type="match status" value="1"/>
</dbReference>
<dbReference type="SUPFAM" id="SSF101852">
    <property type="entry name" value="Bacterial fluorinating enzyme, C-terminal domain"/>
    <property type="match status" value="1"/>
</dbReference>
<dbReference type="SUPFAM" id="SSF102522">
    <property type="entry name" value="Bacterial fluorinating enzyme, N-terminal domain"/>
    <property type="match status" value="1"/>
</dbReference>
<protein>
    <recommendedName>
        <fullName evidence="1">(R)-S-adenosyl-L-methionine hydrolase</fullName>
        <ecNumber evidence="1 7">3.13.2.3</ecNumber>
    </recommendedName>
    <alternativeName>
        <fullName evidence="6">S-adenosyl-L-methionine hydrolase (adenosine-forming)</fullName>
        <shortName evidence="6">SAM hydrolase (adenosine-forming)</shortName>
    </alternativeName>
    <alternativeName>
        <fullName evidence="5">S-adenosyl-L-methionine:hydroxide adenosyltransferase</fullName>
    </alternativeName>
    <alternativeName>
        <fullName evidence="5">SAM hydroxide adenosyltransferase</fullName>
    </alternativeName>
</protein>
<feature type="chain" id="PRO_0000451807" description="(R)-S-adenosyl-L-methionine hydrolase">
    <location>
        <begin position="1"/>
        <end position="256"/>
    </location>
</feature>
<feature type="binding site" evidence="4 10">
    <location>
        <position position="7"/>
    </location>
    <ligand>
        <name>adenosine</name>
        <dbReference type="ChEBI" id="CHEBI:16335"/>
    </ligand>
</feature>
<feature type="binding site" evidence="4 10">
    <location>
        <position position="41"/>
    </location>
    <ligand>
        <name>adenosine</name>
        <dbReference type="ChEBI" id="CHEBI:16335"/>
    </ligand>
</feature>
<feature type="binding site" evidence="4 10">
    <location>
        <position position="68"/>
    </location>
    <ligand>
        <name>adenosine</name>
        <dbReference type="ChEBI" id="CHEBI:16335"/>
    </ligand>
</feature>
<feature type="binding site" evidence="8 11">
    <location>
        <position position="183"/>
    </location>
    <ligand>
        <name>(R)-S-adenosyl-L-methionine</name>
        <dbReference type="ChEBI" id="CHEBI:142093"/>
    </ligand>
</feature>
<feature type="binding site" evidence="4 10">
    <location>
        <position position="183"/>
    </location>
    <ligand>
        <name>adenosine</name>
        <dbReference type="ChEBI" id="CHEBI:16335"/>
    </ligand>
</feature>
<feature type="binding site" evidence="8 11">
    <location>
        <position position="212"/>
    </location>
    <ligand>
        <name>(R)-S-adenosyl-L-methionine</name>
        <dbReference type="ChEBI" id="CHEBI:142093"/>
    </ligand>
</feature>
<feature type="binding site" evidence="8 11">
    <location>
        <position position="226"/>
    </location>
    <ligand>
        <name>(R)-S-adenosyl-L-methionine</name>
        <dbReference type="ChEBI" id="CHEBI:142093"/>
    </ligand>
</feature>
<feature type="binding site" evidence="8 11">
    <location>
        <position position="231"/>
    </location>
    <ligand>
        <name>(R)-S-adenosyl-L-methionine</name>
        <dbReference type="ChEBI" id="CHEBI:142093"/>
    </ligand>
</feature>
<feature type="binding site" evidence="8 11">
    <location>
        <position position="234"/>
    </location>
    <ligand>
        <name>(R)-S-adenosyl-L-methionine</name>
        <dbReference type="ChEBI" id="CHEBI:142093"/>
    </ligand>
</feature>
<feature type="binding site" evidence="4 10">
    <location>
        <position position="234"/>
    </location>
    <ligand>
        <name>adenosine</name>
        <dbReference type="ChEBI" id="CHEBI:16335"/>
    </ligand>
</feature>
<feature type="binding site" evidence="8 11">
    <location>
        <position position="236"/>
    </location>
    <ligand>
        <name>(R)-S-adenosyl-L-methionine</name>
        <dbReference type="ChEBI" id="CHEBI:142093"/>
    </ligand>
</feature>
<feature type="site" description="Important for activity" evidence="8">
    <location>
        <position position="68"/>
    </location>
</feature>
<feature type="site" description="Important for activity" evidence="8">
    <location>
        <position position="75"/>
    </location>
</feature>
<feature type="site" description="Important for activity" evidence="8">
    <location>
        <position position="127"/>
    </location>
</feature>
<feature type="strand" evidence="13">
    <location>
        <begin position="1"/>
        <end position="8"/>
    </location>
</feature>
<feature type="strand" evidence="13">
    <location>
        <begin position="10"/>
        <end position="13"/>
    </location>
</feature>
<feature type="helix" evidence="13">
    <location>
        <begin position="14"/>
        <end position="25"/>
    </location>
</feature>
<feature type="strand" evidence="13">
    <location>
        <begin position="30"/>
        <end position="36"/>
    </location>
</feature>
<feature type="helix" evidence="13">
    <location>
        <begin position="43"/>
        <end position="56"/>
    </location>
</feature>
<feature type="strand" evidence="13">
    <location>
        <begin position="62"/>
        <end position="66"/>
    </location>
</feature>
<feature type="turn" evidence="12">
    <location>
        <begin position="69"/>
        <end position="72"/>
    </location>
</feature>
<feature type="strand" evidence="13">
    <location>
        <begin position="77"/>
        <end position="92"/>
    </location>
</feature>
<feature type="turn" evidence="13">
    <location>
        <begin position="93"/>
        <end position="96"/>
    </location>
</feature>
<feature type="helix" evidence="13">
    <location>
        <begin position="97"/>
        <end position="100"/>
    </location>
</feature>
<feature type="strand" evidence="13">
    <location>
        <begin position="103"/>
        <end position="109"/>
    </location>
</feature>
<feature type="helix" evidence="13">
    <location>
        <begin position="111"/>
        <end position="118"/>
    </location>
</feature>
<feature type="helix" evidence="13">
    <location>
        <begin position="127"/>
        <end position="130"/>
    </location>
</feature>
<feature type="helix" evidence="13">
    <location>
        <begin position="132"/>
        <end position="141"/>
    </location>
</feature>
<feature type="helix" evidence="13">
    <location>
        <begin position="145"/>
        <end position="147"/>
    </location>
</feature>
<feature type="strand" evidence="13">
    <location>
        <begin position="149"/>
        <end position="152"/>
    </location>
</feature>
<feature type="helix" evidence="13">
    <location>
        <begin position="154"/>
        <end position="156"/>
    </location>
</feature>
<feature type="strand" evidence="13">
    <location>
        <begin position="165"/>
        <end position="167"/>
    </location>
</feature>
<feature type="strand" evidence="13">
    <location>
        <begin position="170"/>
        <end position="178"/>
    </location>
</feature>
<feature type="strand" evidence="13">
    <location>
        <begin position="184"/>
        <end position="187"/>
    </location>
</feature>
<feature type="strand" evidence="13">
    <location>
        <begin position="195"/>
        <end position="199"/>
    </location>
</feature>
<feature type="turn" evidence="13">
    <location>
        <begin position="200"/>
        <end position="203"/>
    </location>
</feature>
<feature type="strand" evidence="13">
    <location>
        <begin position="204"/>
        <end position="208"/>
    </location>
</feature>
<feature type="helix" evidence="13">
    <location>
        <begin position="212"/>
        <end position="214"/>
    </location>
</feature>
<feature type="strand" evidence="13">
    <location>
        <begin position="220"/>
        <end position="223"/>
    </location>
</feature>
<feature type="strand" evidence="13">
    <location>
        <begin position="227"/>
        <end position="234"/>
    </location>
</feature>
<feature type="helix" evidence="13">
    <location>
        <begin position="239"/>
        <end position="243"/>
    </location>
</feature>
<feature type="strand" evidence="13">
    <location>
        <begin position="250"/>
        <end position="256"/>
    </location>
</feature>
<gene>
    <name evidence="9" type="ordered locus">PH0463</name>
</gene>
<keyword id="KW-0002">3D-structure</keyword>
<keyword id="KW-0378">Hydrolase</keyword>
<keyword id="KW-0949">S-adenosyl-L-methionine</keyword>
<reference key="1">
    <citation type="journal article" date="1998" name="DNA Res.">
        <title>Complete sequence and gene organization of the genome of a hyper-thermophilic archaebacterium, Pyrococcus horikoshii OT3.</title>
        <authorList>
            <person name="Kawarabayasi Y."/>
            <person name="Sawada M."/>
            <person name="Horikawa H."/>
            <person name="Haikawa Y."/>
            <person name="Hino Y."/>
            <person name="Yamamoto S."/>
            <person name="Sekine M."/>
            <person name="Baba S."/>
            <person name="Kosugi H."/>
            <person name="Hosoyama A."/>
            <person name="Nagai Y."/>
            <person name="Sakai M."/>
            <person name="Ogura K."/>
            <person name="Otsuka R."/>
            <person name="Nakazawa H."/>
            <person name="Takamiya M."/>
            <person name="Ohfuku Y."/>
            <person name="Funahashi T."/>
            <person name="Tanaka T."/>
            <person name="Kudoh Y."/>
            <person name="Yamazaki J."/>
            <person name="Kushida N."/>
            <person name="Oguchi A."/>
            <person name="Aoki K."/>
            <person name="Yoshizawa T."/>
            <person name="Nakamura Y."/>
            <person name="Robb F.T."/>
            <person name="Horikoshi K."/>
            <person name="Masuchi Y."/>
            <person name="Shizuya H."/>
            <person name="Kikuchi H."/>
        </authorList>
    </citation>
    <scope>NUCLEOTIDE SEQUENCE [LARGE SCALE GENOMIC DNA]</scope>
    <source>
        <strain>ATCC 700860 / DSM 12428 / JCM 9974 / NBRC 100139 / OT-3</strain>
    </source>
</reference>
<reference key="2">
    <citation type="journal article" date="2008" name="Angew. Chem. Int. Ed.">
        <title>S-adenosyl-L-methionine:hydroxide adenosyltransferase: a SAM enzyme.</title>
        <authorList>
            <person name="Deng H."/>
            <person name="Botting C.H."/>
            <person name="Hamilton J.T."/>
            <person name="Russell R.J."/>
            <person name="O'Hagan D."/>
        </authorList>
    </citation>
    <scope>FUNCTION</scope>
    <scope>CATALYTIC ACTIVITY</scope>
    <scope>BIOPHYSICOCHEMICAL PROPERTIES</scope>
</reference>
<reference evidence="10" key="3">
    <citation type="submission" date="2004-12" db="PDB data bank">
        <title>Crystal structure of project ID PH0463 from Pyrococcus horikoshii OT3.</title>
        <authorList>
            <person name="Shimizu K."/>
            <person name="Kunishima N."/>
        </authorList>
    </citation>
    <scope>X-RAY CRYSTALLOGRAPHY (2.60 ANGSTROMS) IN COMPLEX WITH ADENOSINE</scope>
    <source>
        <strain>ATCC 700860 / DSM 12428 / JCM 9974 / NBRC 100139 / OT-3</strain>
    </source>
</reference>
<reference evidence="11" key="4">
    <citation type="journal article" date="2009" name="ChemBioChem">
        <title>Mechanistic insights into water activation in SAM hydroxide adenosyltransferase (duf-62).</title>
        <authorList>
            <person name="Deng H."/>
            <person name="McMahon S.A."/>
            <person name="Eustaquio A.S."/>
            <person name="Moore B.S."/>
            <person name="Naismith J.H."/>
            <person name="O'Hagan D."/>
        </authorList>
    </citation>
    <scope>X-RAY CRYSTALLOGRAPHY (1.77 ANGSTROMS) IN COMPLEX WITH S-ADENOSYL-L-HOMOCYSTEINE</scope>
    <scope>SUBUNIT</scope>
</reference>